<gene>
    <name evidence="1" type="primary">groEL1</name>
    <name type="synonym">groE1</name>
    <name evidence="1" type="synonym">groL1</name>
    <name type="ordered locus">ML0381</name>
    <name type="ORF">B1620_C3_228</name>
    <name type="ORF">B229_C3_248</name>
</gene>
<dbReference type="EC" id="5.6.1.7" evidence="1"/>
<dbReference type="EMBL" id="Z11665">
    <property type="protein sequence ID" value="CAB62574.1"/>
    <property type="molecule type" value="Genomic_DNA"/>
</dbReference>
<dbReference type="EMBL" id="U00015">
    <property type="protein sequence ID" value="AAC43228.1"/>
    <property type="molecule type" value="Genomic_DNA"/>
</dbReference>
<dbReference type="EMBL" id="U00020">
    <property type="protein sequence ID" value="AAA17312.1"/>
    <property type="molecule type" value="Genomic_DNA"/>
</dbReference>
<dbReference type="EMBL" id="AL583918">
    <property type="protein sequence ID" value="CAC29889.1"/>
    <property type="molecule type" value="Genomic_DNA"/>
</dbReference>
<dbReference type="PIR" id="S25181">
    <property type="entry name" value="S25181"/>
</dbReference>
<dbReference type="RefSeq" id="NP_301373.1">
    <property type="nucleotide sequence ID" value="NC_002677.1"/>
</dbReference>
<dbReference type="SMR" id="P37578"/>
<dbReference type="STRING" id="272631.gene:17574200"/>
<dbReference type="KEGG" id="mle:ML0381"/>
<dbReference type="PATRIC" id="fig|272631.5.peg.643"/>
<dbReference type="Leproma" id="ML0381"/>
<dbReference type="eggNOG" id="COG0459">
    <property type="taxonomic scope" value="Bacteria"/>
</dbReference>
<dbReference type="HOGENOM" id="CLU_016503_3_0_11"/>
<dbReference type="OrthoDB" id="9766614at2"/>
<dbReference type="Proteomes" id="UP000000806">
    <property type="component" value="Chromosome"/>
</dbReference>
<dbReference type="GO" id="GO:0005737">
    <property type="term" value="C:cytoplasm"/>
    <property type="evidence" value="ECO:0007669"/>
    <property type="project" value="UniProtKB-SubCell"/>
</dbReference>
<dbReference type="GO" id="GO:0005524">
    <property type="term" value="F:ATP binding"/>
    <property type="evidence" value="ECO:0007669"/>
    <property type="project" value="UniProtKB-UniRule"/>
</dbReference>
<dbReference type="GO" id="GO:0140662">
    <property type="term" value="F:ATP-dependent protein folding chaperone"/>
    <property type="evidence" value="ECO:0007669"/>
    <property type="project" value="InterPro"/>
</dbReference>
<dbReference type="GO" id="GO:0016853">
    <property type="term" value="F:isomerase activity"/>
    <property type="evidence" value="ECO:0007669"/>
    <property type="project" value="UniProtKB-KW"/>
</dbReference>
<dbReference type="GO" id="GO:0051082">
    <property type="term" value="F:unfolded protein binding"/>
    <property type="evidence" value="ECO:0007669"/>
    <property type="project" value="UniProtKB-UniRule"/>
</dbReference>
<dbReference type="GO" id="GO:0042026">
    <property type="term" value="P:protein refolding"/>
    <property type="evidence" value="ECO:0007669"/>
    <property type="project" value="UniProtKB-UniRule"/>
</dbReference>
<dbReference type="CDD" id="cd03344">
    <property type="entry name" value="GroEL"/>
    <property type="match status" value="1"/>
</dbReference>
<dbReference type="FunFam" id="3.50.7.10:FF:000001">
    <property type="entry name" value="60 kDa chaperonin"/>
    <property type="match status" value="1"/>
</dbReference>
<dbReference type="Gene3D" id="3.50.7.10">
    <property type="entry name" value="GroEL"/>
    <property type="match status" value="1"/>
</dbReference>
<dbReference type="Gene3D" id="1.10.560.10">
    <property type="entry name" value="GroEL-like equatorial domain"/>
    <property type="match status" value="1"/>
</dbReference>
<dbReference type="Gene3D" id="3.30.260.10">
    <property type="entry name" value="TCP-1-like chaperonin intermediate domain"/>
    <property type="match status" value="1"/>
</dbReference>
<dbReference type="HAMAP" id="MF_00600">
    <property type="entry name" value="CH60"/>
    <property type="match status" value="1"/>
</dbReference>
<dbReference type="InterPro" id="IPR018370">
    <property type="entry name" value="Chaperonin_Cpn60_CS"/>
</dbReference>
<dbReference type="InterPro" id="IPR001844">
    <property type="entry name" value="Cpn60/GroEL"/>
</dbReference>
<dbReference type="InterPro" id="IPR002423">
    <property type="entry name" value="Cpn60/GroEL/TCP-1"/>
</dbReference>
<dbReference type="InterPro" id="IPR027409">
    <property type="entry name" value="GroEL-like_apical_dom_sf"/>
</dbReference>
<dbReference type="InterPro" id="IPR027413">
    <property type="entry name" value="GROEL-like_equatorial_sf"/>
</dbReference>
<dbReference type="InterPro" id="IPR027410">
    <property type="entry name" value="TCP-1-like_intermed_sf"/>
</dbReference>
<dbReference type="NCBIfam" id="TIGR02348">
    <property type="entry name" value="GroEL"/>
    <property type="match status" value="1"/>
</dbReference>
<dbReference type="NCBIfam" id="NF000592">
    <property type="entry name" value="PRK00013.1"/>
    <property type="match status" value="1"/>
</dbReference>
<dbReference type="NCBIfam" id="NF009487">
    <property type="entry name" value="PRK12849.1"/>
    <property type="match status" value="1"/>
</dbReference>
<dbReference type="NCBIfam" id="NF009488">
    <property type="entry name" value="PRK12850.1"/>
    <property type="match status" value="1"/>
</dbReference>
<dbReference type="NCBIfam" id="NF009489">
    <property type="entry name" value="PRK12851.1"/>
    <property type="match status" value="1"/>
</dbReference>
<dbReference type="PANTHER" id="PTHR45633">
    <property type="entry name" value="60 KDA HEAT SHOCK PROTEIN, MITOCHONDRIAL"/>
    <property type="match status" value="1"/>
</dbReference>
<dbReference type="Pfam" id="PF00118">
    <property type="entry name" value="Cpn60_TCP1"/>
    <property type="match status" value="1"/>
</dbReference>
<dbReference type="PRINTS" id="PR00298">
    <property type="entry name" value="CHAPERONIN60"/>
</dbReference>
<dbReference type="SUPFAM" id="SSF52029">
    <property type="entry name" value="GroEL apical domain-like"/>
    <property type="match status" value="1"/>
</dbReference>
<dbReference type="SUPFAM" id="SSF48592">
    <property type="entry name" value="GroEL equatorial domain-like"/>
    <property type="match status" value="1"/>
</dbReference>
<dbReference type="SUPFAM" id="SSF54849">
    <property type="entry name" value="GroEL-intermediate domain like"/>
    <property type="match status" value="1"/>
</dbReference>
<dbReference type="PROSITE" id="PS00296">
    <property type="entry name" value="CHAPERONINS_CPN60"/>
    <property type="match status" value="1"/>
</dbReference>
<keyword id="KW-0067">ATP-binding</keyword>
<keyword id="KW-0143">Chaperone</keyword>
<keyword id="KW-0963">Cytoplasm</keyword>
<keyword id="KW-0413">Isomerase</keyword>
<keyword id="KW-0547">Nucleotide-binding</keyword>
<keyword id="KW-1185">Reference proteome</keyword>
<evidence type="ECO:0000255" key="1">
    <source>
        <dbReference type="HAMAP-Rule" id="MF_00600"/>
    </source>
</evidence>
<comment type="function">
    <text evidence="1">Together with its co-chaperonin GroES, plays an essential role in assisting protein folding. The GroEL-GroES system forms a nano-cage that allows encapsulation of the non-native substrate proteins and provides a physical environment optimized to promote and accelerate protein folding.</text>
</comment>
<comment type="catalytic activity">
    <reaction evidence="1">
        <text>ATP + H2O + a folded polypeptide = ADP + phosphate + an unfolded polypeptide.</text>
        <dbReference type="EC" id="5.6.1.7"/>
    </reaction>
</comment>
<comment type="subunit">
    <text evidence="1">Forms a cylinder of 14 subunits composed of two heptameric rings stacked back-to-back. Interacts with the co-chaperonin GroES.</text>
</comment>
<comment type="subcellular location">
    <subcellularLocation>
        <location evidence="1">Cytoplasm</location>
    </subcellularLocation>
</comment>
<comment type="similarity">
    <text evidence="1">Belongs to the chaperonin (HSP60) family.</text>
</comment>
<reference key="1">
    <citation type="journal article" date="1992" name="Mol. Microbiol.">
        <title>Mycobacteria contain two groEL genes: the second Mycobacterium leprae groEL gene is arranged in an operon with groES.</title>
        <authorList>
            <person name="de Wit T.F.R."/>
            <person name="Bekelie S."/>
            <person name="Osland A."/>
            <person name="Miko T.L."/>
            <person name="Hermans P.W.M."/>
            <person name="van Soolingen D."/>
            <person name="Drijfhout J."/>
            <person name="Schoeningh R."/>
            <person name="Janson A.A.M."/>
            <person name="Thole J.E.R."/>
        </authorList>
    </citation>
    <scope>NUCLEOTIDE SEQUENCE [GENOMIC DNA]</scope>
</reference>
<reference key="2">
    <citation type="submission" date="1994-03" db="EMBL/GenBank/DDBJ databases">
        <authorList>
            <person name="Smith D.R."/>
            <person name="Robison K."/>
        </authorList>
    </citation>
    <scope>NUCLEOTIDE SEQUENCE [GENOMIC DNA]</scope>
</reference>
<reference key="3">
    <citation type="journal article" date="2001" name="Nature">
        <title>Massive gene decay in the leprosy bacillus.</title>
        <authorList>
            <person name="Cole S.T."/>
            <person name="Eiglmeier K."/>
            <person name="Parkhill J."/>
            <person name="James K.D."/>
            <person name="Thomson N.R."/>
            <person name="Wheeler P.R."/>
            <person name="Honore N."/>
            <person name="Garnier T."/>
            <person name="Churcher C.M."/>
            <person name="Harris D.E."/>
            <person name="Mungall K.L."/>
            <person name="Basham D."/>
            <person name="Brown D."/>
            <person name="Chillingworth T."/>
            <person name="Connor R."/>
            <person name="Davies R.M."/>
            <person name="Devlin K."/>
            <person name="Duthoy S."/>
            <person name="Feltwell T."/>
            <person name="Fraser A."/>
            <person name="Hamlin N."/>
            <person name="Holroyd S."/>
            <person name="Hornsby T."/>
            <person name="Jagels K."/>
            <person name="Lacroix C."/>
            <person name="Maclean J."/>
            <person name="Moule S."/>
            <person name="Murphy L.D."/>
            <person name="Oliver K."/>
            <person name="Quail M.A."/>
            <person name="Rajandream M.A."/>
            <person name="Rutherford K.M."/>
            <person name="Rutter S."/>
            <person name="Seeger K."/>
            <person name="Simon S."/>
            <person name="Simmonds M."/>
            <person name="Skelton J."/>
            <person name="Squares R."/>
            <person name="Squares S."/>
            <person name="Stevens K."/>
            <person name="Taylor K."/>
            <person name="Whitehead S."/>
            <person name="Woodward J.R."/>
            <person name="Barrell B.G."/>
        </authorList>
    </citation>
    <scope>NUCLEOTIDE SEQUENCE [LARGE SCALE GENOMIC DNA]</scope>
    <source>
        <strain>TN</strain>
    </source>
</reference>
<name>CH601_MYCLE</name>
<sequence length="537" mass="55816">MSKLIEYDETARHAMEVGMNKLADTVRVTLGPRGRHVVLAKAFGGPTITNDGVTVAREIDLEDPFENLGAQLVKSVATKTNDVAGDGTTTATVLAQALVKGGLRMVAAGANPVALGAGISKAADAVSEALLAVATPVAGKDAITQVATVSSRDEQIGALVGEGMNKVGTDGVVSVEESSTLDTELEFTEGVGFDKGFLSAYFVTDFDSQQAVLDDPLVLLHQEKISSLPELLPMLEKVTESGKPLLIVAEDLEGEALATLVVNSIRKTLKAVAVKSPFFGDRRKAFLEDLAIVTGGQVVNPETGLVLREVGTDVLGSARRVVVSKDDTIIVDGGGSNDAVAKRVNQLRAEIEVSDSEWDREKLQERVAKLAGGVAVIKVGAVTETALKKRKESVEDAVAAAKASIEEGIIAGGGSALVQCGAALKQLRTSLTGDEALGIDVFFEALKAPLYWIATNAGLDGAVVVDKVSGLPAGHGLNASTLGYGDLVADGVVDPVKVTRSAVLNAASVARMMLTTETAVVDKPAKTEEHDHHGHAH</sequence>
<protein>
    <recommendedName>
        <fullName evidence="1">Chaperonin GroEL 1</fullName>
        <ecNumber evidence="1">5.6.1.7</ecNumber>
    </recommendedName>
    <alternativeName>
        <fullName evidence="1">60 kDa chaperonin 1</fullName>
    </alternativeName>
    <alternativeName>
        <fullName evidence="1">Chaperonin-60 1</fullName>
        <shortName evidence="1">Cpn60 1</shortName>
    </alternativeName>
</protein>
<accession>P37578</accession>
<organism>
    <name type="scientific">Mycobacterium leprae (strain TN)</name>
    <dbReference type="NCBI Taxonomy" id="272631"/>
    <lineage>
        <taxon>Bacteria</taxon>
        <taxon>Bacillati</taxon>
        <taxon>Actinomycetota</taxon>
        <taxon>Actinomycetes</taxon>
        <taxon>Mycobacteriales</taxon>
        <taxon>Mycobacteriaceae</taxon>
        <taxon>Mycobacterium</taxon>
    </lineage>
</organism>
<feature type="chain" id="PRO_0000063436" description="Chaperonin GroEL 1">
    <location>
        <begin position="1"/>
        <end position="537"/>
    </location>
</feature>
<feature type="binding site" evidence="1">
    <location>
        <begin position="29"/>
        <end position="32"/>
    </location>
    <ligand>
        <name>ATP</name>
        <dbReference type="ChEBI" id="CHEBI:30616"/>
    </ligand>
</feature>
<feature type="binding site" evidence="1">
    <location>
        <begin position="86"/>
        <end position="90"/>
    </location>
    <ligand>
        <name>ATP</name>
        <dbReference type="ChEBI" id="CHEBI:30616"/>
    </ligand>
</feature>
<feature type="binding site" evidence="1">
    <location>
        <position position="413"/>
    </location>
    <ligand>
        <name>ATP</name>
        <dbReference type="ChEBI" id="CHEBI:30616"/>
    </ligand>
</feature>
<feature type="binding site" evidence="1">
    <location>
        <position position="494"/>
    </location>
    <ligand>
        <name>ATP</name>
        <dbReference type="ChEBI" id="CHEBI:30616"/>
    </ligand>
</feature>
<proteinExistence type="inferred from homology"/>